<comment type="function">
    <text evidence="1">Cell division factor that enhances FtsZ-ring assembly. Directly interacts with FtsZ and promotes bundling of FtsZ protofilaments, with a reduction in FtsZ GTPase activity.</text>
</comment>
<comment type="subunit">
    <text evidence="1">Interacts with FtsZ.</text>
</comment>
<comment type="subcellular location">
    <subcellularLocation>
        <location evidence="1">Cytoplasm</location>
    </subcellularLocation>
    <text evidence="1">Localizes to mid-cell in an FtsZ-dependent manner.</text>
</comment>
<comment type="similarity">
    <text evidence="1">Belongs to the ZapD family.</text>
</comment>
<gene>
    <name evidence="1" type="primary">zapD</name>
    <name type="ordered locus">Neut_1046</name>
</gene>
<feature type="chain" id="PRO_1000064915" description="Cell division protein ZapD">
    <location>
        <begin position="1"/>
        <end position="251"/>
    </location>
</feature>
<reference key="1">
    <citation type="journal article" date="2007" name="Environ. Microbiol.">
        <title>Whole-genome analysis of the ammonia-oxidizing bacterium, Nitrosomonas eutropha C91: implications for niche adaptation.</title>
        <authorList>
            <person name="Stein L.Y."/>
            <person name="Arp D.J."/>
            <person name="Berube P.M."/>
            <person name="Chain P.S."/>
            <person name="Hauser L."/>
            <person name="Jetten M.S."/>
            <person name="Klotz M.G."/>
            <person name="Larimer F.W."/>
            <person name="Norton J.M."/>
            <person name="Op den Camp H.J.M."/>
            <person name="Shin M."/>
            <person name="Wei X."/>
        </authorList>
    </citation>
    <scope>NUCLEOTIDE SEQUENCE [LARGE SCALE GENOMIC DNA]</scope>
    <source>
        <strain>DSM 101675 / C91 / Nm57</strain>
    </source>
</reference>
<proteinExistence type="inferred from homology"/>
<accession>Q0AH80</accession>
<organism>
    <name type="scientific">Nitrosomonas eutropha (strain DSM 101675 / C91 / Nm57)</name>
    <dbReference type="NCBI Taxonomy" id="335283"/>
    <lineage>
        <taxon>Bacteria</taxon>
        <taxon>Pseudomonadati</taxon>
        <taxon>Pseudomonadota</taxon>
        <taxon>Betaproteobacteria</taxon>
        <taxon>Nitrosomonadales</taxon>
        <taxon>Nitrosomonadaceae</taxon>
        <taxon>Nitrosomonas</taxon>
    </lineage>
</organism>
<dbReference type="EMBL" id="CP000450">
    <property type="protein sequence ID" value="ABI59302.1"/>
    <property type="molecule type" value="Genomic_DNA"/>
</dbReference>
<dbReference type="RefSeq" id="WP_011634125.1">
    <property type="nucleotide sequence ID" value="NC_008344.1"/>
</dbReference>
<dbReference type="SMR" id="Q0AH80"/>
<dbReference type="STRING" id="335283.Neut_1046"/>
<dbReference type="KEGG" id="net:Neut_1046"/>
<dbReference type="eggNOG" id="COG4582">
    <property type="taxonomic scope" value="Bacteria"/>
</dbReference>
<dbReference type="HOGENOM" id="CLU_076303_0_1_4"/>
<dbReference type="OrthoDB" id="5294622at2"/>
<dbReference type="Proteomes" id="UP000001966">
    <property type="component" value="Chromosome"/>
</dbReference>
<dbReference type="GO" id="GO:0032153">
    <property type="term" value="C:cell division site"/>
    <property type="evidence" value="ECO:0007669"/>
    <property type="project" value="TreeGrafter"/>
</dbReference>
<dbReference type="GO" id="GO:0005737">
    <property type="term" value="C:cytoplasm"/>
    <property type="evidence" value="ECO:0007669"/>
    <property type="project" value="UniProtKB-SubCell"/>
</dbReference>
<dbReference type="GO" id="GO:0000917">
    <property type="term" value="P:division septum assembly"/>
    <property type="evidence" value="ECO:0007669"/>
    <property type="project" value="UniProtKB-KW"/>
</dbReference>
<dbReference type="GO" id="GO:0043093">
    <property type="term" value="P:FtsZ-dependent cytokinesis"/>
    <property type="evidence" value="ECO:0007669"/>
    <property type="project" value="UniProtKB-UniRule"/>
</dbReference>
<dbReference type="Gene3D" id="1.10.3900.10">
    <property type="entry name" value="YacF-like"/>
    <property type="match status" value="1"/>
</dbReference>
<dbReference type="Gene3D" id="2.60.440.10">
    <property type="entry name" value="YacF-like domains"/>
    <property type="match status" value="1"/>
</dbReference>
<dbReference type="HAMAP" id="MF_01092">
    <property type="entry name" value="ZapD"/>
    <property type="match status" value="1"/>
</dbReference>
<dbReference type="InterPro" id="IPR009777">
    <property type="entry name" value="ZapD"/>
</dbReference>
<dbReference type="InterPro" id="IPR027462">
    <property type="entry name" value="ZapD_C"/>
</dbReference>
<dbReference type="InterPro" id="IPR036268">
    <property type="entry name" value="ZapD_sf"/>
</dbReference>
<dbReference type="NCBIfam" id="NF003656">
    <property type="entry name" value="PRK05287.1-4"/>
    <property type="match status" value="1"/>
</dbReference>
<dbReference type="PANTHER" id="PTHR39455">
    <property type="entry name" value="CELL DIVISION PROTEIN ZAPD"/>
    <property type="match status" value="1"/>
</dbReference>
<dbReference type="PANTHER" id="PTHR39455:SF1">
    <property type="entry name" value="CELL DIVISION PROTEIN ZAPD"/>
    <property type="match status" value="1"/>
</dbReference>
<dbReference type="Pfam" id="PF07072">
    <property type="entry name" value="ZapD"/>
    <property type="match status" value="1"/>
</dbReference>
<dbReference type="SUPFAM" id="SSF160950">
    <property type="entry name" value="YacF-like"/>
    <property type="match status" value="1"/>
</dbReference>
<keyword id="KW-0131">Cell cycle</keyword>
<keyword id="KW-0132">Cell division</keyword>
<keyword id="KW-0963">Cytoplasm</keyword>
<keyword id="KW-0717">Septation</keyword>
<protein>
    <recommendedName>
        <fullName evidence="1">Cell division protein ZapD</fullName>
    </recommendedName>
    <alternativeName>
        <fullName evidence="1">Z ring-associated protein D</fullName>
    </alternativeName>
</protein>
<sequence length="251" mass="28714">MICYELPLNERIRMLLRLEDLFDKIDFFSARDTSFEHHAALVALFEILDVTSRSDLKSDLLQELDKQRTMLEGLQDNPGVSEKALIHILQDIRAAFRGLLDIPGRIGGHLRDDEWLMSVKQRMSIPGGACEFDLPAYHYWLNMAPDARRADLQNWITPLTSIRSGINIILNILRNSGTKFCYIAAKGVFQQAGSEHQAHLLCLHISDEISCIPEISANKYALNIRFIPWRSDHKTEVCEEDVPFELTFCSL</sequence>
<evidence type="ECO:0000255" key="1">
    <source>
        <dbReference type="HAMAP-Rule" id="MF_01092"/>
    </source>
</evidence>
<name>ZAPD_NITEC</name>